<comment type="function">
    <text evidence="1">This protein is an aporepressor. When complexed with L-tryptophan it binds the operator region of the trp operon and prevents the initiation of transcription (By similarity).</text>
</comment>
<comment type="subunit">
    <text evidence="1">Homodimer.</text>
</comment>
<comment type="subcellular location">
    <subcellularLocation>
        <location evidence="1">Cytoplasm</location>
    </subcellularLocation>
</comment>
<comment type="similarity">
    <text evidence="2">Belongs to the TrpR family.</text>
</comment>
<proteinExistence type="inferred from homology"/>
<keyword id="KW-0963">Cytoplasm</keyword>
<keyword id="KW-0238">DNA-binding</keyword>
<keyword id="KW-1185">Reference proteome</keyword>
<keyword id="KW-0678">Repressor</keyword>
<keyword id="KW-0804">Transcription</keyword>
<keyword id="KW-0805">Transcription regulation</keyword>
<feature type="chain" id="PRO_0000196519" description="Trp operon repressor homolog">
    <location>
        <begin position="1"/>
        <end position="92"/>
    </location>
</feature>
<feature type="DNA-binding region" evidence="1">
    <location>
        <begin position="56"/>
        <end position="78"/>
    </location>
</feature>
<dbReference type="EMBL" id="AE009442">
    <property type="protein sequence ID" value="AAO28738.1"/>
    <property type="molecule type" value="Genomic_DNA"/>
</dbReference>
<dbReference type="RefSeq" id="WP_004572878.1">
    <property type="nucleotide sequence ID" value="NC_004556.1"/>
</dbReference>
<dbReference type="SMR" id="Q87D16"/>
<dbReference type="GeneID" id="93904659"/>
<dbReference type="KEGG" id="xft:PD_0871"/>
<dbReference type="HOGENOM" id="CLU_2573116_0_0_6"/>
<dbReference type="Proteomes" id="UP000002516">
    <property type="component" value="Chromosome"/>
</dbReference>
<dbReference type="GO" id="GO:0005737">
    <property type="term" value="C:cytoplasm"/>
    <property type="evidence" value="ECO:0007669"/>
    <property type="project" value="UniProtKB-SubCell"/>
</dbReference>
<dbReference type="GO" id="GO:0003700">
    <property type="term" value="F:DNA-binding transcription factor activity"/>
    <property type="evidence" value="ECO:0007669"/>
    <property type="project" value="InterPro"/>
</dbReference>
<dbReference type="GO" id="GO:0043565">
    <property type="term" value="F:sequence-specific DNA binding"/>
    <property type="evidence" value="ECO:0007669"/>
    <property type="project" value="InterPro"/>
</dbReference>
<dbReference type="GO" id="GO:0045892">
    <property type="term" value="P:negative regulation of DNA-templated transcription"/>
    <property type="evidence" value="ECO:0007669"/>
    <property type="project" value="UniProtKB-UniRule"/>
</dbReference>
<dbReference type="Gene3D" id="1.10.1270.10">
    <property type="entry name" value="TrpR-like"/>
    <property type="match status" value="1"/>
</dbReference>
<dbReference type="HAMAP" id="MF_00475">
    <property type="entry name" value="Trp_repressor"/>
    <property type="match status" value="1"/>
</dbReference>
<dbReference type="InterPro" id="IPR000831">
    <property type="entry name" value="Trp_repress"/>
</dbReference>
<dbReference type="InterPro" id="IPR013335">
    <property type="entry name" value="Trp_repress_bac"/>
</dbReference>
<dbReference type="InterPro" id="IPR010921">
    <property type="entry name" value="Trp_repressor/repl_initiator"/>
</dbReference>
<dbReference type="InterPro" id="IPR038116">
    <property type="entry name" value="TrpR-like_sf"/>
</dbReference>
<dbReference type="NCBIfam" id="TIGR01321">
    <property type="entry name" value="TrpR"/>
    <property type="match status" value="1"/>
</dbReference>
<dbReference type="PANTHER" id="PTHR38025">
    <property type="entry name" value="TRP OPERON REPRESSOR"/>
    <property type="match status" value="1"/>
</dbReference>
<dbReference type="PANTHER" id="PTHR38025:SF1">
    <property type="entry name" value="TRP OPERON REPRESSOR"/>
    <property type="match status" value="1"/>
</dbReference>
<dbReference type="Pfam" id="PF01371">
    <property type="entry name" value="Trp_repressor"/>
    <property type="match status" value="1"/>
</dbReference>
<dbReference type="PIRSF" id="PIRSF003196">
    <property type="entry name" value="Trp_repressor"/>
    <property type="match status" value="1"/>
</dbReference>
<dbReference type="SUPFAM" id="SSF48295">
    <property type="entry name" value="TrpR-like"/>
    <property type="match status" value="1"/>
</dbReference>
<accession>Q87D16</accession>
<reference key="1">
    <citation type="journal article" date="2003" name="J. Bacteriol.">
        <title>Comparative analyses of the complete genome sequences of Pierce's disease and citrus variegated chlorosis strains of Xylella fastidiosa.</title>
        <authorList>
            <person name="Van Sluys M.A."/>
            <person name="de Oliveira M.C."/>
            <person name="Monteiro-Vitorello C.B."/>
            <person name="Miyaki C.Y."/>
            <person name="Furlan L.R."/>
            <person name="Camargo L.E.A."/>
            <person name="da Silva A.C.R."/>
            <person name="Moon D.H."/>
            <person name="Takita M.A."/>
            <person name="Lemos E.G.M."/>
            <person name="Machado M.A."/>
            <person name="Ferro M.I.T."/>
            <person name="da Silva F.R."/>
            <person name="Goldman M.H.S."/>
            <person name="Goldman G.H."/>
            <person name="Lemos M.V.F."/>
            <person name="El-Dorry H."/>
            <person name="Tsai S.M."/>
            <person name="Carrer H."/>
            <person name="Carraro D.M."/>
            <person name="de Oliveira R.C."/>
            <person name="Nunes L.R."/>
            <person name="Siqueira W.J."/>
            <person name="Coutinho L.L."/>
            <person name="Kimura E.T."/>
            <person name="Ferro E.S."/>
            <person name="Harakava R."/>
            <person name="Kuramae E.E."/>
            <person name="Marino C.L."/>
            <person name="Giglioti E."/>
            <person name="Abreu I.L."/>
            <person name="Alves L.M.C."/>
            <person name="do Amaral A.M."/>
            <person name="Baia G.S."/>
            <person name="Blanco S.R."/>
            <person name="Brito M.S."/>
            <person name="Cannavan F.S."/>
            <person name="Celestino A.V."/>
            <person name="da Cunha A.F."/>
            <person name="Fenille R.C."/>
            <person name="Ferro J.A."/>
            <person name="Formighieri E.F."/>
            <person name="Kishi L.T."/>
            <person name="Leoni S.G."/>
            <person name="Oliveira A.R."/>
            <person name="Rosa V.E. Jr."/>
            <person name="Sassaki F.T."/>
            <person name="Sena J.A.D."/>
            <person name="de Souza A.A."/>
            <person name="Truffi D."/>
            <person name="Tsukumo F."/>
            <person name="Yanai G.M."/>
            <person name="Zaros L.G."/>
            <person name="Civerolo E.L."/>
            <person name="Simpson A.J.G."/>
            <person name="Almeida N.F. Jr."/>
            <person name="Setubal J.C."/>
            <person name="Kitajima J.P."/>
        </authorList>
    </citation>
    <scope>NUCLEOTIDE SEQUENCE [LARGE SCALE GENOMIC DNA]</scope>
    <source>
        <strain>Temecula1 / ATCC 700964</strain>
    </source>
</reference>
<sequence length="92" mass="10656">MSREQAFEMLIKILCKTDSTDDMKLILECILTRSEMEDLIDRIRIYNELLNTSNSQREVASKLGVSITKITRGAANLQDNNIKDFLRKKISY</sequence>
<protein>
    <recommendedName>
        <fullName>Trp operon repressor homolog</fullName>
    </recommendedName>
</protein>
<name>TRPR_XYLFT</name>
<evidence type="ECO:0000250" key="1"/>
<evidence type="ECO:0000305" key="2"/>
<organism>
    <name type="scientific">Xylella fastidiosa (strain Temecula1 / ATCC 700964)</name>
    <dbReference type="NCBI Taxonomy" id="183190"/>
    <lineage>
        <taxon>Bacteria</taxon>
        <taxon>Pseudomonadati</taxon>
        <taxon>Pseudomonadota</taxon>
        <taxon>Gammaproteobacteria</taxon>
        <taxon>Lysobacterales</taxon>
        <taxon>Lysobacteraceae</taxon>
        <taxon>Xylella</taxon>
    </lineage>
</organism>
<gene>
    <name type="primary">trpR</name>
    <name type="ordered locus">PD_0871</name>
</gene>